<name>JHD1_MYCMD</name>
<organism>
    <name type="scientific">Mycosarcoma maydis</name>
    <name type="common">Corn smut fungus</name>
    <name type="synonym">Ustilago maydis</name>
    <dbReference type="NCBI Taxonomy" id="5270"/>
    <lineage>
        <taxon>Eukaryota</taxon>
        <taxon>Fungi</taxon>
        <taxon>Dikarya</taxon>
        <taxon>Basidiomycota</taxon>
        <taxon>Ustilaginomycotina</taxon>
        <taxon>Ustilaginomycetes</taxon>
        <taxon>Ustilaginales</taxon>
        <taxon>Ustilaginaceae</taxon>
        <taxon>Mycosarcoma</taxon>
    </lineage>
</organism>
<reference key="1">
    <citation type="journal article" date="2006" name="Nature">
        <title>Insights from the genome of the biotrophic fungal plant pathogen Ustilago maydis.</title>
        <authorList>
            <person name="Kaemper J."/>
            <person name="Kahmann R."/>
            <person name="Boelker M."/>
            <person name="Ma L.-J."/>
            <person name="Brefort T."/>
            <person name="Saville B.J."/>
            <person name="Banuett F."/>
            <person name="Kronstad J.W."/>
            <person name="Gold S.E."/>
            <person name="Mueller O."/>
            <person name="Perlin M.H."/>
            <person name="Woesten H.A.B."/>
            <person name="de Vries R."/>
            <person name="Ruiz-Herrera J."/>
            <person name="Reynaga-Pena C.G."/>
            <person name="Snetselaar K."/>
            <person name="McCann M."/>
            <person name="Perez-Martin J."/>
            <person name="Feldbruegge M."/>
            <person name="Basse C.W."/>
            <person name="Steinberg G."/>
            <person name="Ibeas J.I."/>
            <person name="Holloman W."/>
            <person name="Guzman P."/>
            <person name="Farman M.L."/>
            <person name="Stajich J.E."/>
            <person name="Sentandreu R."/>
            <person name="Gonzalez-Prieto J.M."/>
            <person name="Kennell J.C."/>
            <person name="Molina L."/>
            <person name="Schirawski J."/>
            <person name="Mendoza-Mendoza A."/>
            <person name="Greilinger D."/>
            <person name="Muench K."/>
            <person name="Roessel N."/>
            <person name="Scherer M."/>
            <person name="Vranes M."/>
            <person name="Ladendorf O."/>
            <person name="Vincon V."/>
            <person name="Fuchs U."/>
            <person name="Sandrock B."/>
            <person name="Meng S."/>
            <person name="Ho E.C.H."/>
            <person name="Cahill M.J."/>
            <person name="Boyce K.J."/>
            <person name="Klose J."/>
            <person name="Klosterman S.J."/>
            <person name="Deelstra H.J."/>
            <person name="Ortiz-Castellanos L."/>
            <person name="Li W."/>
            <person name="Sanchez-Alonso P."/>
            <person name="Schreier P.H."/>
            <person name="Haeuser-Hahn I."/>
            <person name="Vaupel M."/>
            <person name="Koopmann E."/>
            <person name="Friedrich G."/>
            <person name="Voss H."/>
            <person name="Schlueter T."/>
            <person name="Margolis J."/>
            <person name="Platt D."/>
            <person name="Swimmer C."/>
            <person name="Gnirke A."/>
            <person name="Chen F."/>
            <person name="Vysotskaia V."/>
            <person name="Mannhaupt G."/>
            <person name="Gueldener U."/>
            <person name="Muensterkoetter M."/>
            <person name="Haase D."/>
            <person name="Oesterheld M."/>
            <person name="Mewes H.-W."/>
            <person name="Mauceli E.W."/>
            <person name="DeCaprio D."/>
            <person name="Wade C.M."/>
            <person name="Butler J."/>
            <person name="Young S.K."/>
            <person name="Jaffe D.B."/>
            <person name="Calvo S.E."/>
            <person name="Nusbaum C."/>
            <person name="Galagan J.E."/>
            <person name="Birren B.W."/>
        </authorList>
    </citation>
    <scope>NUCLEOTIDE SEQUENCE [LARGE SCALE GENOMIC DNA]</scope>
    <source>
        <strain>DSM 14603 / FGSC 9021 / UM521</strain>
    </source>
</reference>
<reference key="2">
    <citation type="submission" date="2014-09" db="EMBL/GenBank/DDBJ databases">
        <authorList>
            <person name="Gueldener U."/>
            <person name="Muensterkoetter M."/>
            <person name="Walter M.C."/>
            <person name="Mannhaupt G."/>
            <person name="Kahmann R."/>
        </authorList>
    </citation>
    <scope>GENOME REANNOTATION</scope>
    <source>
        <strain>DSM 14603 / FGSC 9021 / UM521</strain>
    </source>
</reference>
<proteinExistence type="inferred from homology"/>
<keyword id="KW-0156">Chromatin regulator</keyword>
<keyword id="KW-0223">Dioxygenase</keyword>
<keyword id="KW-0408">Iron</keyword>
<keyword id="KW-0479">Metal-binding</keyword>
<keyword id="KW-0539">Nucleus</keyword>
<keyword id="KW-0560">Oxidoreductase</keyword>
<keyword id="KW-1185">Reference proteome</keyword>
<keyword id="KW-0804">Transcription</keyword>
<keyword id="KW-0805">Transcription regulation</keyword>
<keyword id="KW-0862">Zinc</keyword>
<keyword id="KW-0863">Zinc-finger</keyword>
<feature type="chain" id="PRO_0000226799" description="JmjC domain-containing histone demethylation protein 1">
    <location>
        <begin position="1"/>
        <end position="669"/>
    </location>
</feature>
<feature type="domain" description="JmjC" evidence="3">
    <location>
        <begin position="332"/>
        <end position="494"/>
    </location>
</feature>
<feature type="zinc finger region" description="PHD-type">
    <location>
        <begin position="65"/>
        <end position="126"/>
    </location>
</feature>
<feature type="region of interest" description="Disordered" evidence="4">
    <location>
        <begin position="1"/>
        <end position="61"/>
    </location>
</feature>
<feature type="region of interest" description="Disordered" evidence="4">
    <location>
        <begin position="131"/>
        <end position="150"/>
    </location>
</feature>
<feature type="region of interest" description="Disordered" evidence="4">
    <location>
        <begin position="220"/>
        <end position="256"/>
    </location>
</feature>
<feature type="compositionally biased region" description="Polar residues" evidence="4">
    <location>
        <begin position="16"/>
        <end position="27"/>
    </location>
</feature>
<feature type="compositionally biased region" description="Polar residues" evidence="4">
    <location>
        <begin position="36"/>
        <end position="49"/>
    </location>
</feature>
<feature type="compositionally biased region" description="Basic residues" evidence="4">
    <location>
        <begin position="246"/>
        <end position="255"/>
    </location>
</feature>
<feature type="binding site" evidence="3">
    <location>
        <position position="390"/>
    </location>
    <ligand>
        <name>Fe cation</name>
        <dbReference type="ChEBI" id="CHEBI:24875"/>
        <note>catalytic</note>
    </ligand>
</feature>
<feature type="binding site" evidence="3">
    <location>
        <position position="392"/>
    </location>
    <ligand>
        <name>Fe cation</name>
        <dbReference type="ChEBI" id="CHEBI:24875"/>
        <note>catalytic</note>
    </ligand>
</feature>
<feature type="binding site" evidence="1">
    <location>
        <position position="407"/>
    </location>
    <ligand>
        <name>substrate</name>
    </ligand>
</feature>
<feature type="binding site" evidence="3">
    <location>
        <position position="462"/>
    </location>
    <ligand>
        <name>Fe cation</name>
        <dbReference type="ChEBI" id="CHEBI:24875"/>
        <note>catalytic</note>
    </ligand>
</feature>
<dbReference type="EC" id="1.14.11.27" evidence="2"/>
<dbReference type="EMBL" id="CM003152">
    <property type="protein sequence ID" value="KIS67423.1"/>
    <property type="molecule type" value="Genomic_DNA"/>
</dbReference>
<dbReference type="RefSeq" id="XP_011390848.1">
    <property type="nucleotide sequence ID" value="XM_011392546.1"/>
</dbReference>
<dbReference type="SMR" id="Q4P5U1"/>
<dbReference type="STRING" id="237631.Q4P5U1"/>
<dbReference type="EnsemblFungi" id="KIS67423">
    <property type="protein sequence ID" value="KIS67423"/>
    <property type="gene ID" value="UMAG_04522"/>
</dbReference>
<dbReference type="GeneID" id="23564680"/>
<dbReference type="KEGG" id="uma:UMAG_04522"/>
<dbReference type="VEuPathDB" id="FungiDB:UMAG_04522"/>
<dbReference type="eggNOG" id="KOG1633">
    <property type="taxonomic scope" value="Eukaryota"/>
</dbReference>
<dbReference type="HOGENOM" id="CLU_413428_0_0_1"/>
<dbReference type="InParanoid" id="Q4P5U1"/>
<dbReference type="OMA" id="DWVTRDW"/>
<dbReference type="OrthoDB" id="5876800at2759"/>
<dbReference type="Proteomes" id="UP000000561">
    <property type="component" value="Chromosome 13"/>
</dbReference>
<dbReference type="GO" id="GO:0005634">
    <property type="term" value="C:nucleus"/>
    <property type="evidence" value="ECO:0007669"/>
    <property type="project" value="UniProtKB-SubCell"/>
</dbReference>
<dbReference type="GO" id="GO:0032452">
    <property type="term" value="F:histone demethylase activity"/>
    <property type="evidence" value="ECO:0000318"/>
    <property type="project" value="GO_Central"/>
</dbReference>
<dbReference type="GO" id="GO:0140680">
    <property type="term" value="F:histone H3K36me/H3K36me2 demethylase activity"/>
    <property type="evidence" value="ECO:0007669"/>
    <property type="project" value="UniProtKB-EC"/>
</dbReference>
<dbReference type="GO" id="GO:0003712">
    <property type="term" value="F:transcription coregulator activity"/>
    <property type="evidence" value="ECO:0000318"/>
    <property type="project" value="GO_Central"/>
</dbReference>
<dbReference type="GO" id="GO:0008270">
    <property type="term" value="F:zinc ion binding"/>
    <property type="evidence" value="ECO:0007669"/>
    <property type="project" value="UniProtKB-KW"/>
</dbReference>
<dbReference type="GO" id="GO:0006338">
    <property type="term" value="P:chromatin remodeling"/>
    <property type="evidence" value="ECO:0000318"/>
    <property type="project" value="GO_Central"/>
</dbReference>
<dbReference type="GO" id="GO:0006357">
    <property type="term" value="P:regulation of transcription by RNA polymerase II"/>
    <property type="evidence" value="ECO:0000318"/>
    <property type="project" value="GO_Central"/>
</dbReference>
<dbReference type="CDD" id="cd15517">
    <property type="entry name" value="PHD_TCF19_like"/>
    <property type="match status" value="1"/>
</dbReference>
<dbReference type="Gene3D" id="2.60.120.650">
    <property type="entry name" value="Cupin"/>
    <property type="match status" value="2"/>
</dbReference>
<dbReference type="InterPro" id="IPR041667">
    <property type="entry name" value="Cupin_8"/>
</dbReference>
<dbReference type="InterPro" id="IPR041070">
    <property type="entry name" value="JHD"/>
</dbReference>
<dbReference type="InterPro" id="IPR050690">
    <property type="entry name" value="JHDM1_Histone_Demethylase"/>
</dbReference>
<dbReference type="InterPro" id="IPR003347">
    <property type="entry name" value="JmjC_dom"/>
</dbReference>
<dbReference type="InterPro" id="IPR019786">
    <property type="entry name" value="Zinc_finger_PHD-type_CS"/>
</dbReference>
<dbReference type="InterPro" id="IPR011011">
    <property type="entry name" value="Znf_FYVE_PHD"/>
</dbReference>
<dbReference type="PANTHER" id="PTHR23123">
    <property type="entry name" value="PHD/F-BOX CONTAINING PROTEIN"/>
    <property type="match status" value="1"/>
</dbReference>
<dbReference type="Pfam" id="PF13621">
    <property type="entry name" value="Cupin_8"/>
    <property type="match status" value="1"/>
</dbReference>
<dbReference type="Pfam" id="PF17811">
    <property type="entry name" value="JHD"/>
    <property type="match status" value="1"/>
</dbReference>
<dbReference type="SMART" id="SM00558">
    <property type="entry name" value="JmjC"/>
    <property type="match status" value="1"/>
</dbReference>
<dbReference type="SUPFAM" id="SSF51197">
    <property type="entry name" value="Clavaminate synthase-like"/>
    <property type="match status" value="1"/>
</dbReference>
<dbReference type="SUPFAM" id="SSF57903">
    <property type="entry name" value="FYVE/PHD zinc finger"/>
    <property type="match status" value="1"/>
</dbReference>
<dbReference type="PROSITE" id="PS51184">
    <property type="entry name" value="JMJC"/>
    <property type="match status" value="1"/>
</dbReference>
<dbReference type="PROSITE" id="PS01359">
    <property type="entry name" value="ZF_PHD_1"/>
    <property type="match status" value="1"/>
</dbReference>
<protein>
    <recommendedName>
        <fullName>JmjC domain-containing histone demethylation protein 1</fullName>
        <ecNumber evidence="2">1.14.11.27</ecNumber>
    </recommendedName>
    <alternativeName>
        <fullName>[Histone-H3]-lysine-36 demethylase 1</fullName>
    </alternativeName>
</protein>
<comment type="function">
    <text evidence="2">Histone demethylase that specifically demethylates 'Lys-36' of histone H3, thereby playing a central role in histone code.</text>
</comment>
<comment type="catalytic activity">
    <reaction evidence="2">
        <text>N(6),N(6)-dimethyl-L-lysyl(36)-[histone H3] + 2 2-oxoglutarate + 2 O2 = L-lysyl(36)-[histone H3] + 2 formaldehyde + 2 succinate + 2 CO2</text>
        <dbReference type="Rhea" id="RHEA:42032"/>
        <dbReference type="Rhea" id="RHEA-COMP:9785"/>
        <dbReference type="Rhea" id="RHEA-COMP:9787"/>
        <dbReference type="ChEBI" id="CHEBI:15379"/>
        <dbReference type="ChEBI" id="CHEBI:16526"/>
        <dbReference type="ChEBI" id="CHEBI:16810"/>
        <dbReference type="ChEBI" id="CHEBI:16842"/>
        <dbReference type="ChEBI" id="CHEBI:29969"/>
        <dbReference type="ChEBI" id="CHEBI:30031"/>
        <dbReference type="ChEBI" id="CHEBI:61976"/>
        <dbReference type="EC" id="1.14.11.27"/>
    </reaction>
</comment>
<comment type="cofactor">
    <cofactor evidence="1">
        <name>Fe(2+)</name>
        <dbReference type="ChEBI" id="CHEBI:29033"/>
    </cofactor>
    <text evidence="1">Binds 1 Fe(2+) ion per subunit.</text>
</comment>
<comment type="subcellular location">
    <subcellularLocation>
        <location evidence="1">Nucleus</location>
    </subcellularLocation>
</comment>
<comment type="domain">
    <text evidence="1">The JmjC domain mediates the demethylation activity.</text>
</comment>
<comment type="similarity">
    <text evidence="5">Belongs to the JHDM1 histone demethylase family.</text>
</comment>
<accession>Q4P5U1</accession>
<accession>A0A0D1CKW7</accession>
<sequence length="669" mass="74838">MTAVAASSRVSDPLAASSSAHPRTLRSSPRKRTTSHDSSISPSAAQSKQLPRRKKPRTELVDESELDCAACPAVGQPAPTPGKGAASDRETWICCTHCKTWFHCICIGLENPDDFSKWYCQPCITRSEQTFESGTSSSHPPFANVVRPPRRKSERAKLQIDYAAIQEGIPADPLGRWKNLLNAYEFEPDQFRRMQGHEWTFDWLLHDESALKQPVLVPAPPDRSSQAPHVQAKAEDVAASPVPRPKPARAKKQATHRLVPCHTSIPGMVVPPPEMSIFDVADIIGHDTPVEVIDVASQSSSKASWTISEWAEYFNTPKEKKKKTLNVISLEVTGTPMQAYVEAPQLVRDLDWVTRDWPAERRDASCSENSWPKVQRYVLMGVEGAYSDWHIDFAGSSVYYHVIWGQKTFLFAPPTARNLAAYKAWCSSTRQDFDWLGDHLHSLTRVDIGPGETMLIPSGWLHCVYTPKNTLVVGGNFLTDWNVATQWKLVEIEEATKVPRKFRFPHLKRLSWFVAKGWNDRLEPLAEFETLTKEEDQVLEESAQVSAQVDVGSLTEVVPPLKVLNNIELVLQSLSDDLELIQDPYVAESGDERKVKQQKAAREAIPTHHVGNIQKAEAMLASLRQRVDRAKSLADAVQSERVCLTWEATRAKKAKAANGSAIKSRKARR</sequence>
<gene>
    <name type="primary">JHD1</name>
    <name type="ORF">UMAG_04522</name>
</gene>
<evidence type="ECO:0000250" key="1"/>
<evidence type="ECO:0000250" key="2">
    <source>
        <dbReference type="UniProtKB" id="P40034"/>
    </source>
</evidence>
<evidence type="ECO:0000255" key="3">
    <source>
        <dbReference type="PROSITE-ProRule" id="PRU00538"/>
    </source>
</evidence>
<evidence type="ECO:0000256" key="4">
    <source>
        <dbReference type="SAM" id="MobiDB-lite"/>
    </source>
</evidence>
<evidence type="ECO:0000305" key="5"/>